<evidence type="ECO:0000255" key="1"/>
<evidence type="ECO:0000255" key="2">
    <source>
        <dbReference type="PROSITE-ProRule" id="PRU00498"/>
    </source>
</evidence>
<evidence type="ECO:0000269" key="3">
    <source>
    </source>
</evidence>
<evidence type="ECO:0000269" key="4">
    <source>
    </source>
</evidence>
<evidence type="ECO:0000303" key="5">
    <source>
    </source>
</evidence>
<evidence type="ECO:0000303" key="6">
    <source>
    </source>
</evidence>
<evidence type="ECO:0000303" key="7">
    <source>
    </source>
</evidence>
<evidence type="ECO:0000305" key="8"/>
<evidence type="ECO:0000305" key="9">
    <source>
    </source>
</evidence>
<evidence type="ECO:0000305" key="10">
    <source>
    </source>
</evidence>
<evidence type="ECO:0000305" key="11">
    <source>
    </source>
</evidence>
<keyword id="KW-0325">Glycoprotein</keyword>
<keyword id="KW-0964">Secreted</keyword>
<keyword id="KW-0732">Signal</keyword>
<keyword id="KW-0843">Virulence</keyword>
<dbReference type="EMBL" id="HM543167">
    <property type="protein sequence ID" value="AEJ88232.1"/>
    <property type="molecule type" value="Genomic_DNA"/>
</dbReference>
<dbReference type="SMR" id="L7NCR0"/>
<dbReference type="GlyCosmos" id="L7NCR0">
    <property type="glycosylation" value="1 site, No reported glycans"/>
</dbReference>
<dbReference type="VEuPathDB" id="FungiDB:DVH05_028340"/>
<dbReference type="PHI-base" id="PHI:8061"/>
<dbReference type="GO" id="GO:0005576">
    <property type="term" value="C:extracellular region"/>
    <property type="evidence" value="ECO:0007669"/>
    <property type="project" value="UniProtKB-SubCell"/>
</dbReference>
<dbReference type="InterPro" id="IPR008701">
    <property type="entry name" value="NPP1"/>
</dbReference>
<dbReference type="PANTHER" id="PTHR33657">
    <property type="entry name" value="DOMAIN PROTEIN, PUTATIVE (AFU_ORTHOLOGUE AFUA_5G00600)-RELATED"/>
    <property type="match status" value="1"/>
</dbReference>
<dbReference type="PANTHER" id="PTHR33657:SF8">
    <property type="entry name" value="DOMAIN PROTEIN, PUTATIVE (AFU_ORTHOLOGUE AFUA_5G00600)-RELATED"/>
    <property type="match status" value="1"/>
</dbReference>
<dbReference type="Pfam" id="PF05630">
    <property type="entry name" value="NPP1"/>
    <property type="match status" value="1"/>
</dbReference>
<dbReference type="PIRSF" id="PIRSF029958">
    <property type="entry name" value="Necrosis-inducing_protein"/>
    <property type="match status" value="1"/>
</dbReference>
<name>NLP1_PHYCP</name>
<gene>
    <name evidence="6" type="primary">NLP1</name>
    <name evidence="5" type="synonym">NPP1</name>
    <name evidence="7" type="ORF">Pc129892</name>
</gene>
<feature type="signal peptide" evidence="1">
    <location>
        <begin position="1"/>
        <end position="18"/>
    </location>
</feature>
<feature type="chain" id="PRO_5003982453" description="NLP effector protein 1">
    <location>
        <begin position="19"/>
        <end position="234"/>
    </location>
</feature>
<feature type="short sequence motif" description="Conserved undecapeptide motif I" evidence="11">
    <location>
        <begin position="102"/>
        <end position="112"/>
    </location>
</feature>
<feature type="short sequence motif" description="Hepta-peptide GHRHDWE motif II" evidence="10">
    <location>
        <begin position="119"/>
        <end position="125"/>
    </location>
</feature>
<feature type="glycosylation site" description="N-linked (GlcNAc...) asparagine" evidence="2">
    <location>
        <position position="66"/>
    </location>
</feature>
<sequence length="234" mass="25647">MQLRAFISVFASLACVNAAVIDHDQVVPFAQPTPTTTLQTLAVQYKPQIYIANGCHPYPAVDEDGNTSGGLKPTGSQSAGCKGSGYGSQIYGRAVAYEGVYAFMYSWYMPKDETLPGLGHRHDWEACVVWLDSLENPNVVALSASYHSTYLTYYPPDSDYLDGNSAKIEYSTSWVILDHLLSATSTSGETQDLIMWDQLTDAARTALEDTDFGDANVPFKDANFETKLANAYYT</sequence>
<reference key="1">
    <citation type="journal article" date="2011" name="Genet. Mol. Res.">
        <title>Identification of 18 genes encoding necrosis-inducing proteins from the plant pathogen Phytophthora capsici (Pythiaceae: Oomycetes).</title>
        <authorList>
            <person name="Feng B.Z."/>
            <person name="Li P.Q."/>
            <person name="Fu L."/>
            <person name="Sun B.B."/>
            <person name="Zhang X.G."/>
        </authorList>
    </citation>
    <scope>NUCLEOTIDE SEQUENCE [GENOMIC DNA]</scope>
    <scope>DOMAIN</scope>
</reference>
<reference key="2">
    <citation type="journal article" date="2014" name="BMC Plant Biol.">
        <title>Characterization of necrosis-inducing NLP proteins in Phytophthora capsici.</title>
        <authorList>
            <person name="Feng B.Z."/>
            <person name="Zhu X.P."/>
            <person name="Fu L."/>
            <person name="Lv R.F."/>
            <person name="Storey D."/>
            <person name="Tooley P."/>
            <person name="Zhang X.G."/>
        </authorList>
    </citation>
    <scope>INDUCTION</scope>
    <scope>FUNCTION</scope>
</reference>
<reference key="3">
    <citation type="journal article" date="2018" name="Mol. Genet. Genomics">
        <title>Identification and functional analysis of the NLP-encoding genes from the phytopathogenic oomycete Phytophthora capsici.</title>
        <authorList>
            <person name="Chen X.R."/>
            <person name="Huang S.X."/>
            <person name="Zhang Y."/>
            <person name="Sheng G.L."/>
            <person name="Li Y.P."/>
            <person name="Zhu F."/>
        </authorList>
    </citation>
    <scope>FUNCTION</scope>
    <scope>DOMAIN</scope>
    <scope>INDUCTION</scope>
</reference>
<comment type="function">
    <text evidence="3 4">Secreted effector that contributes to virulence during infection by P.capsici (PubMed:24886309, PubMed:29572661). Induces distinct chlorosis at 3 days after inoculation of host C.annuum leaves, and all the chlorotic areas gradually turn brown and become moderately necrotic at 7 days after inoculation. Leads only to chlorotic areas, without necrosis at 7 days after non-host N.benthamiana leaves infection (PubMed:24886309). Induces cell death in hot pepper (PubMed:29572661).</text>
</comment>
<comment type="subcellular location">
    <subcellularLocation>
        <location evidence="9">Secreted</location>
    </subcellularLocation>
</comment>
<comment type="induction">
    <text evidence="3 4">Expression reached the highest levels at 3 days after inoculation of pepper leaves, followed by a gradual decline.</text>
</comment>
<comment type="domain">
    <text evidence="11">Key residues/motif important for the effector activities are degenerated in most NLPs, including the nlp24 peptide consisting of the conserved region I (11-aa immunogenic part) and conserved region II (the heptapeptide GHRHDWE motif) that is important for phytotoxic activity.</text>
</comment>
<comment type="similarity">
    <text evidence="8">Belongs to the Necrosis inducing protein (NPP1) family.</text>
</comment>
<proteinExistence type="evidence at transcript level"/>
<accession>L7NCR0</accession>
<organism>
    <name type="scientific">Phytophthora capsici</name>
    <dbReference type="NCBI Taxonomy" id="4784"/>
    <lineage>
        <taxon>Eukaryota</taxon>
        <taxon>Sar</taxon>
        <taxon>Stramenopiles</taxon>
        <taxon>Oomycota</taxon>
        <taxon>Peronosporales</taxon>
        <taxon>Peronosporaceae</taxon>
        <taxon>Phytophthora</taxon>
    </lineage>
</organism>
<protein>
    <recommendedName>
        <fullName evidence="6">NLP effector protein 1</fullName>
    </recommendedName>
    <alternativeName>
        <fullName evidence="5">Necrosis-inducing protein 1</fullName>
    </alternativeName>
    <alternativeName>
        <fullName evidence="5">Nep1-like protein 1</fullName>
    </alternativeName>
</protein>